<accession>Q7VQI7</accession>
<proteinExistence type="inferred from homology"/>
<comment type="function">
    <text evidence="1">Cell wall formation.</text>
</comment>
<comment type="catalytic activity">
    <reaction evidence="1">
        <text>UDP-N-acetyl-alpha-D-muramate + L-alanine + ATP = UDP-N-acetyl-alpha-D-muramoyl-L-alanine + ADP + phosphate + H(+)</text>
        <dbReference type="Rhea" id="RHEA:23372"/>
        <dbReference type="ChEBI" id="CHEBI:15378"/>
        <dbReference type="ChEBI" id="CHEBI:30616"/>
        <dbReference type="ChEBI" id="CHEBI:43474"/>
        <dbReference type="ChEBI" id="CHEBI:57972"/>
        <dbReference type="ChEBI" id="CHEBI:70757"/>
        <dbReference type="ChEBI" id="CHEBI:83898"/>
        <dbReference type="ChEBI" id="CHEBI:456216"/>
        <dbReference type="EC" id="6.3.2.8"/>
    </reaction>
</comment>
<comment type="pathway">
    <text evidence="1">Cell wall biogenesis; peptidoglycan biosynthesis.</text>
</comment>
<comment type="subcellular location">
    <subcellularLocation>
        <location evidence="1">Cytoplasm</location>
    </subcellularLocation>
</comment>
<comment type="similarity">
    <text evidence="1">Belongs to the MurCDEF family.</text>
</comment>
<gene>
    <name evidence="1" type="primary">murC</name>
    <name type="ordered locus">Bfl143</name>
</gene>
<dbReference type="EC" id="6.3.2.8" evidence="1"/>
<dbReference type="EMBL" id="BX248583">
    <property type="protein sequence ID" value="CAD83664.1"/>
    <property type="molecule type" value="Genomic_DNA"/>
</dbReference>
<dbReference type="SMR" id="Q7VQI7"/>
<dbReference type="STRING" id="203907.Bfl143"/>
<dbReference type="KEGG" id="bfl:Bfl143"/>
<dbReference type="eggNOG" id="COG0773">
    <property type="taxonomic scope" value="Bacteria"/>
</dbReference>
<dbReference type="HOGENOM" id="CLU_028104_2_2_6"/>
<dbReference type="OrthoDB" id="9804126at2"/>
<dbReference type="UniPathway" id="UPA00219"/>
<dbReference type="Proteomes" id="UP000002192">
    <property type="component" value="Chromosome"/>
</dbReference>
<dbReference type="GO" id="GO:0005737">
    <property type="term" value="C:cytoplasm"/>
    <property type="evidence" value="ECO:0007669"/>
    <property type="project" value="UniProtKB-SubCell"/>
</dbReference>
<dbReference type="GO" id="GO:0005524">
    <property type="term" value="F:ATP binding"/>
    <property type="evidence" value="ECO:0007669"/>
    <property type="project" value="UniProtKB-UniRule"/>
</dbReference>
<dbReference type="GO" id="GO:0008763">
    <property type="term" value="F:UDP-N-acetylmuramate-L-alanine ligase activity"/>
    <property type="evidence" value="ECO:0007669"/>
    <property type="project" value="UniProtKB-UniRule"/>
</dbReference>
<dbReference type="GO" id="GO:0051301">
    <property type="term" value="P:cell division"/>
    <property type="evidence" value="ECO:0007669"/>
    <property type="project" value="UniProtKB-KW"/>
</dbReference>
<dbReference type="GO" id="GO:0071555">
    <property type="term" value="P:cell wall organization"/>
    <property type="evidence" value="ECO:0007669"/>
    <property type="project" value="UniProtKB-KW"/>
</dbReference>
<dbReference type="GO" id="GO:0009252">
    <property type="term" value="P:peptidoglycan biosynthetic process"/>
    <property type="evidence" value="ECO:0007669"/>
    <property type="project" value="UniProtKB-UniRule"/>
</dbReference>
<dbReference type="GO" id="GO:0008360">
    <property type="term" value="P:regulation of cell shape"/>
    <property type="evidence" value="ECO:0007669"/>
    <property type="project" value="UniProtKB-KW"/>
</dbReference>
<dbReference type="FunFam" id="3.40.1190.10:FF:000001">
    <property type="entry name" value="UDP-N-acetylmuramate--L-alanine ligase"/>
    <property type="match status" value="1"/>
</dbReference>
<dbReference type="Gene3D" id="3.90.190.20">
    <property type="entry name" value="Mur ligase, C-terminal domain"/>
    <property type="match status" value="1"/>
</dbReference>
<dbReference type="Gene3D" id="3.40.1190.10">
    <property type="entry name" value="Mur-like, catalytic domain"/>
    <property type="match status" value="1"/>
</dbReference>
<dbReference type="Gene3D" id="3.40.50.720">
    <property type="entry name" value="NAD(P)-binding Rossmann-like Domain"/>
    <property type="match status" value="1"/>
</dbReference>
<dbReference type="HAMAP" id="MF_00046">
    <property type="entry name" value="MurC"/>
    <property type="match status" value="1"/>
</dbReference>
<dbReference type="InterPro" id="IPR036565">
    <property type="entry name" value="Mur-like_cat_sf"/>
</dbReference>
<dbReference type="InterPro" id="IPR004101">
    <property type="entry name" value="Mur_ligase_C"/>
</dbReference>
<dbReference type="InterPro" id="IPR036615">
    <property type="entry name" value="Mur_ligase_C_dom_sf"/>
</dbReference>
<dbReference type="InterPro" id="IPR013221">
    <property type="entry name" value="Mur_ligase_cen"/>
</dbReference>
<dbReference type="InterPro" id="IPR000713">
    <property type="entry name" value="Mur_ligase_N"/>
</dbReference>
<dbReference type="InterPro" id="IPR050061">
    <property type="entry name" value="MurCDEF_pg_biosynth"/>
</dbReference>
<dbReference type="InterPro" id="IPR005758">
    <property type="entry name" value="UDP-N-AcMur_Ala_ligase_MurC"/>
</dbReference>
<dbReference type="NCBIfam" id="TIGR01082">
    <property type="entry name" value="murC"/>
    <property type="match status" value="1"/>
</dbReference>
<dbReference type="PANTHER" id="PTHR43445:SF3">
    <property type="entry name" value="UDP-N-ACETYLMURAMATE--L-ALANINE LIGASE"/>
    <property type="match status" value="1"/>
</dbReference>
<dbReference type="PANTHER" id="PTHR43445">
    <property type="entry name" value="UDP-N-ACETYLMURAMATE--L-ALANINE LIGASE-RELATED"/>
    <property type="match status" value="1"/>
</dbReference>
<dbReference type="Pfam" id="PF01225">
    <property type="entry name" value="Mur_ligase"/>
    <property type="match status" value="1"/>
</dbReference>
<dbReference type="Pfam" id="PF02875">
    <property type="entry name" value="Mur_ligase_C"/>
    <property type="match status" value="1"/>
</dbReference>
<dbReference type="Pfam" id="PF08245">
    <property type="entry name" value="Mur_ligase_M"/>
    <property type="match status" value="1"/>
</dbReference>
<dbReference type="SUPFAM" id="SSF51984">
    <property type="entry name" value="MurCD N-terminal domain"/>
    <property type="match status" value="1"/>
</dbReference>
<dbReference type="SUPFAM" id="SSF53623">
    <property type="entry name" value="MurD-like peptide ligases, catalytic domain"/>
    <property type="match status" value="1"/>
</dbReference>
<dbReference type="SUPFAM" id="SSF53244">
    <property type="entry name" value="MurD-like peptide ligases, peptide-binding domain"/>
    <property type="match status" value="1"/>
</dbReference>
<reference key="1">
    <citation type="journal article" date="2003" name="Proc. Natl. Acad. Sci. U.S.A.">
        <title>The genome sequence of Blochmannia floridanus: comparative analysis of reduced genomes.</title>
        <authorList>
            <person name="Gil R."/>
            <person name="Silva F.J."/>
            <person name="Zientz E."/>
            <person name="Delmotte F."/>
            <person name="Gonzalez-Candelas F."/>
            <person name="Latorre A."/>
            <person name="Rausell C."/>
            <person name="Kamerbeek J."/>
            <person name="Gadau J."/>
            <person name="Hoelldobler B."/>
            <person name="van Ham R.C.H.J."/>
            <person name="Gross R."/>
            <person name="Moya A."/>
        </authorList>
    </citation>
    <scope>NUCLEOTIDE SEQUENCE [LARGE SCALE GENOMIC DNA]</scope>
</reference>
<organism>
    <name type="scientific">Blochmanniella floridana</name>
    <dbReference type="NCBI Taxonomy" id="203907"/>
    <lineage>
        <taxon>Bacteria</taxon>
        <taxon>Pseudomonadati</taxon>
        <taxon>Pseudomonadota</taxon>
        <taxon>Gammaproteobacteria</taxon>
        <taxon>Enterobacterales</taxon>
        <taxon>Enterobacteriaceae</taxon>
        <taxon>ant endosymbionts</taxon>
        <taxon>Candidatus Blochmanniella</taxon>
    </lineage>
</organism>
<keyword id="KW-0067">ATP-binding</keyword>
<keyword id="KW-0131">Cell cycle</keyword>
<keyword id="KW-0132">Cell division</keyword>
<keyword id="KW-0133">Cell shape</keyword>
<keyword id="KW-0961">Cell wall biogenesis/degradation</keyword>
<keyword id="KW-0963">Cytoplasm</keyword>
<keyword id="KW-0436">Ligase</keyword>
<keyword id="KW-0547">Nucleotide-binding</keyword>
<keyword id="KW-0573">Peptidoglycan synthesis</keyword>
<keyword id="KW-1185">Reference proteome</keyword>
<feature type="chain" id="PRO_0000182075" description="UDP-N-acetylmuramate--L-alanine ligase">
    <location>
        <begin position="1"/>
        <end position="480"/>
    </location>
</feature>
<feature type="binding site" evidence="1">
    <location>
        <begin position="127"/>
        <end position="133"/>
    </location>
    <ligand>
        <name>ATP</name>
        <dbReference type="ChEBI" id="CHEBI:30616"/>
    </ligand>
</feature>
<name>MURC_BLOFL</name>
<evidence type="ECO:0000255" key="1">
    <source>
        <dbReference type="HAMAP-Rule" id="MF_00046"/>
    </source>
</evidence>
<sequence length="480" mass="54194">MQSSYFKNGILPIINRFYTKQIHFVGIGGIGMCGLAMLLLAQGYCITGSDIAQNDMIRSLLKLGIKIFFGHRDSNINQEINIVVISSAIDINNPEVQQAKRLKIPVIHRVKILSELMRYKYGIAIAGTHGKTTTVSMLTNIYVEAGLDPTFVNGGIIRSQGVSARLGYGNDFIAESDESDKSFLRLCPVVAVITNIDTDHMNTYHQNFEYLQEVFIKFLDKLPMYGYAVVCIDDPVVRKILPRINRKIITYGFSKDATLCIVKYYQYREKSNFTILIKNNKELQVVLNTPGYHNALNAAASIAVAIEEGIRDTVILKSMSNFTGTNRRFEFLGNYPLNIINGRVGKVMVIDDYGHHPAELRSTIIAIRTGWSDHRLVMVFQPHRFTRTHELYDNFVRVLSTVDVLLMLDIYSAGEQPIMGINAQSLCDSILKYAKVQPIFVQNECFLLKFLMNLLRDKDLLLIQGAGTISEIVKALFIKR</sequence>
<protein>
    <recommendedName>
        <fullName evidence="1">UDP-N-acetylmuramate--L-alanine ligase</fullName>
        <ecNumber evidence="1">6.3.2.8</ecNumber>
    </recommendedName>
    <alternativeName>
        <fullName evidence="1">UDP-N-acetylmuramoyl-L-alanine synthetase</fullName>
    </alternativeName>
</protein>